<reference key="1">
    <citation type="journal article" date="2003" name="Proc. Natl. Acad. Sci. U.S.A.">
        <title>The genome sequence of Clostridium tetani, the causative agent of tetanus disease.</title>
        <authorList>
            <person name="Brueggemann H."/>
            <person name="Baeumer S."/>
            <person name="Fricke W.F."/>
            <person name="Wiezer A."/>
            <person name="Liesegang H."/>
            <person name="Decker I."/>
            <person name="Herzberg C."/>
            <person name="Martinez-Arias R."/>
            <person name="Merkl R."/>
            <person name="Henne A."/>
            <person name="Gottschalk G."/>
        </authorList>
    </citation>
    <scope>NUCLEOTIDE SEQUENCE [LARGE SCALE GENOMIC DNA]</scope>
    <source>
        <strain>Massachusetts / E88</strain>
    </source>
</reference>
<feature type="chain" id="PRO_0000163443" description="Large ribosomal subunit protein bL19">
    <location>
        <begin position="1"/>
        <end position="115"/>
    </location>
</feature>
<name>RL19_CLOTE</name>
<dbReference type="EMBL" id="AE015927">
    <property type="protein sequence ID" value="AAO35819.1"/>
    <property type="status" value="ALT_INIT"/>
    <property type="molecule type" value="Genomic_DNA"/>
</dbReference>
<dbReference type="RefSeq" id="WP_035109897.1">
    <property type="nucleotide sequence ID" value="NC_004557.1"/>
</dbReference>
<dbReference type="SMR" id="Q895M1"/>
<dbReference type="STRING" id="212717.CTC_01252"/>
<dbReference type="GeneID" id="24253923"/>
<dbReference type="KEGG" id="ctc:CTC_01252"/>
<dbReference type="HOGENOM" id="CLU_103507_2_1_9"/>
<dbReference type="OrthoDB" id="9803541at2"/>
<dbReference type="Proteomes" id="UP000001412">
    <property type="component" value="Chromosome"/>
</dbReference>
<dbReference type="GO" id="GO:0022625">
    <property type="term" value="C:cytosolic large ribosomal subunit"/>
    <property type="evidence" value="ECO:0007669"/>
    <property type="project" value="TreeGrafter"/>
</dbReference>
<dbReference type="GO" id="GO:0003735">
    <property type="term" value="F:structural constituent of ribosome"/>
    <property type="evidence" value="ECO:0007669"/>
    <property type="project" value="InterPro"/>
</dbReference>
<dbReference type="GO" id="GO:0006412">
    <property type="term" value="P:translation"/>
    <property type="evidence" value="ECO:0007669"/>
    <property type="project" value="UniProtKB-UniRule"/>
</dbReference>
<dbReference type="FunFam" id="2.30.30.790:FF:000001">
    <property type="entry name" value="50S ribosomal protein L19"/>
    <property type="match status" value="1"/>
</dbReference>
<dbReference type="Gene3D" id="2.30.30.790">
    <property type="match status" value="1"/>
</dbReference>
<dbReference type="HAMAP" id="MF_00402">
    <property type="entry name" value="Ribosomal_bL19"/>
    <property type="match status" value="1"/>
</dbReference>
<dbReference type="InterPro" id="IPR001857">
    <property type="entry name" value="Ribosomal_bL19"/>
</dbReference>
<dbReference type="InterPro" id="IPR018257">
    <property type="entry name" value="Ribosomal_bL19_CS"/>
</dbReference>
<dbReference type="InterPro" id="IPR038657">
    <property type="entry name" value="Ribosomal_bL19_sf"/>
</dbReference>
<dbReference type="InterPro" id="IPR008991">
    <property type="entry name" value="Translation_prot_SH3-like_sf"/>
</dbReference>
<dbReference type="NCBIfam" id="TIGR01024">
    <property type="entry name" value="rplS_bact"/>
    <property type="match status" value="1"/>
</dbReference>
<dbReference type="PANTHER" id="PTHR15680:SF9">
    <property type="entry name" value="LARGE RIBOSOMAL SUBUNIT PROTEIN BL19M"/>
    <property type="match status" value="1"/>
</dbReference>
<dbReference type="PANTHER" id="PTHR15680">
    <property type="entry name" value="RIBOSOMAL PROTEIN L19"/>
    <property type="match status" value="1"/>
</dbReference>
<dbReference type="Pfam" id="PF01245">
    <property type="entry name" value="Ribosomal_L19"/>
    <property type="match status" value="1"/>
</dbReference>
<dbReference type="PIRSF" id="PIRSF002191">
    <property type="entry name" value="Ribosomal_L19"/>
    <property type="match status" value="1"/>
</dbReference>
<dbReference type="PRINTS" id="PR00061">
    <property type="entry name" value="RIBOSOMALL19"/>
</dbReference>
<dbReference type="SUPFAM" id="SSF50104">
    <property type="entry name" value="Translation proteins SH3-like domain"/>
    <property type="match status" value="1"/>
</dbReference>
<dbReference type="PROSITE" id="PS01015">
    <property type="entry name" value="RIBOSOMAL_L19"/>
    <property type="match status" value="1"/>
</dbReference>
<gene>
    <name evidence="1" type="primary">rplS</name>
    <name type="ordered locus">CTC_01252</name>
</gene>
<protein>
    <recommendedName>
        <fullName evidence="1">Large ribosomal subunit protein bL19</fullName>
    </recommendedName>
    <alternativeName>
        <fullName evidence="2">50S ribosomal protein L19</fullName>
    </alternativeName>
</protein>
<accession>Q895M1</accession>
<keyword id="KW-1185">Reference proteome</keyword>
<keyword id="KW-0687">Ribonucleoprotein</keyword>
<keyword id="KW-0689">Ribosomal protein</keyword>
<proteinExistence type="inferred from homology"/>
<comment type="function">
    <text evidence="1">This protein is located at the 30S-50S ribosomal subunit interface and may play a role in the structure and function of the aminoacyl-tRNA binding site.</text>
</comment>
<comment type="similarity">
    <text evidence="1">Belongs to the bacterial ribosomal protein bL19 family.</text>
</comment>
<comment type="sequence caution" evidence="2">
    <conflict type="erroneous initiation">
        <sequence resource="EMBL-CDS" id="AAO35819"/>
    </conflict>
</comment>
<sequence length="115" mass="13196">MLDVIKAIEAEQIRTDLPAFKVGDTVKVHVKIKEGTRERIQVFEGTVIKRQNGGLRETFTVRRLAYGVGVERTFPVNAPTVSKIEIVRKGKVRRAKLFYLRDRVGKAAKVKERRY</sequence>
<evidence type="ECO:0000255" key="1">
    <source>
        <dbReference type="HAMAP-Rule" id="MF_00402"/>
    </source>
</evidence>
<evidence type="ECO:0000305" key="2"/>
<organism>
    <name type="scientific">Clostridium tetani (strain Massachusetts / E88)</name>
    <dbReference type="NCBI Taxonomy" id="212717"/>
    <lineage>
        <taxon>Bacteria</taxon>
        <taxon>Bacillati</taxon>
        <taxon>Bacillota</taxon>
        <taxon>Clostridia</taxon>
        <taxon>Eubacteriales</taxon>
        <taxon>Clostridiaceae</taxon>
        <taxon>Clostridium</taxon>
    </lineage>
</organism>